<sequence>MWIGVISLFPEMFRAITEYGVTGRAVKHGLLNVECWDPRDFTYDRHHTVDDRPYGGGPGMLMMVQPLREAIHQAKAAAGDGAKVIYLSPQGRKLDQQGVCELATNEKLILVCGRYEGIDERVIQTEIDEEWSVGDYVLSGGELPAMIMIDAVARFVPGVLGHAASAKEDSFAEGLLDHPHYTRPEVLDGMAVPAVLLSGNHAHINRWRMKQSLGRTWLRRPELLESLALTDEQRVLLAEFQQEHLQRTAE</sequence>
<name>TRMD_PROMH</name>
<proteinExistence type="inferred from homology"/>
<accession>B4EUW6</accession>
<comment type="function">
    <text evidence="1">Specifically methylates guanosine-37 in various tRNAs.</text>
</comment>
<comment type="catalytic activity">
    <reaction evidence="1">
        <text>guanosine(37) in tRNA + S-adenosyl-L-methionine = N(1)-methylguanosine(37) in tRNA + S-adenosyl-L-homocysteine + H(+)</text>
        <dbReference type="Rhea" id="RHEA:36899"/>
        <dbReference type="Rhea" id="RHEA-COMP:10145"/>
        <dbReference type="Rhea" id="RHEA-COMP:10147"/>
        <dbReference type="ChEBI" id="CHEBI:15378"/>
        <dbReference type="ChEBI" id="CHEBI:57856"/>
        <dbReference type="ChEBI" id="CHEBI:59789"/>
        <dbReference type="ChEBI" id="CHEBI:73542"/>
        <dbReference type="ChEBI" id="CHEBI:74269"/>
        <dbReference type="EC" id="2.1.1.228"/>
    </reaction>
</comment>
<comment type="subunit">
    <text evidence="1">Homodimer.</text>
</comment>
<comment type="subcellular location">
    <subcellularLocation>
        <location evidence="1">Cytoplasm</location>
    </subcellularLocation>
</comment>
<comment type="similarity">
    <text evidence="1">Belongs to the RNA methyltransferase TrmD family.</text>
</comment>
<keyword id="KW-0963">Cytoplasm</keyword>
<keyword id="KW-0489">Methyltransferase</keyword>
<keyword id="KW-1185">Reference proteome</keyword>
<keyword id="KW-0949">S-adenosyl-L-methionine</keyword>
<keyword id="KW-0808">Transferase</keyword>
<keyword id="KW-0819">tRNA processing</keyword>
<protein>
    <recommendedName>
        <fullName evidence="1">tRNA (guanine-N(1)-)-methyltransferase</fullName>
        <ecNumber evidence="1">2.1.1.228</ecNumber>
    </recommendedName>
    <alternativeName>
        <fullName evidence="1">M1G-methyltransferase</fullName>
    </alternativeName>
    <alternativeName>
        <fullName evidence="1">tRNA [GM37] methyltransferase</fullName>
    </alternativeName>
</protein>
<gene>
    <name evidence="1" type="primary">trmD</name>
    <name type="ordered locus">PMI0385</name>
</gene>
<reference key="1">
    <citation type="journal article" date="2008" name="J. Bacteriol.">
        <title>Complete genome sequence of uropathogenic Proteus mirabilis, a master of both adherence and motility.</title>
        <authorList>
            <person name="Pearson M.M."/>
            <person name="Sebaihia M."/>
            <person name="Churcher C."/>
            <person name="Quail M.A."/>
            <person name="Seshasayee A.S."/>
            <person name="Luscombe N.M."/>
            <person name="Abdellah Z."/>
            <person name="Arrosmith C."/>
            <person name="Atkin B."/>
            <person name="Chillingworth T."/>
            <person name="Hauser H."/>
            <person name="Jagels K."/>
            <person name="Moule S."/>
            <person name="Mungall K."/>
            <person name="Norbertczak H."/>
            <person name="Rabbinowitsch E."/>
            <person name="Walker D."/>
            <person name="Whithead S."/>
            <person name="Thomson N.R."/>
            <person name="Rather P.N."/>
            <person name="Parkhill J."/>
            <person name="Mobley H.L.T."/>
        </authorList>
    </citation>
    <scope>NUCLEOTIDE SEQUENCE [LARGE SCALE GENOMIC DNA]</scope>
    <source>
        <strain>HI4320</strain>
    </source>
</reference>
<dbReference type="EC" id="2.1.1.228" evidence="1"/>
<dbReference type="EMBL" id="AM942759">
    <property type="protein sequence ID" value="CAR40985.1"/>
    <property type="molecule type" value="Genomic_DNA"/>
</dbReference>
<dbReference type="RefSeq" id="WP_004244770.1">
    <property type="nucleotide sequence ID" value="NC_010554.1"/>
</dbReference>
<dbReference type="SMR" id="B4EUW6"/>
<dbReference type="EnsemblBacteria" id="CAR40985">
    <property type="protein sequence ID" value="CAR40985"/>
    <property type="gene ID" value="PMI0385"/>
</dbReference>
<dbReference type="GeneID" id="6802430"/>
<dbReference type="KEGG" id="pmr:PMI0385"/>
<dbReference type="eggNOG" id="COG0336">
    <property type="taxonomic scope" value="Bacteria"/>
</dbReference>
<dbReference type="HOGENOM" id="CLU_047363_0_1_6"/>
<dbReference type="Proteomes" id="UP000008319">
    <property type="component" value="Chromosome"/>
</dbReference>
<dbReference type="GO" id="GO:0005829">
    <property type="term" value="C:cytosol"/>
    <property type="evidence" value="ECO:0007669"/>
    <property type="project" value="TreeGrafter"/>
</dbReference>
<dbReference type="GO" id="GO:0052906">
    <property type="term" value="F:tRNA (guanine(37)-N1)-methyltransferase activity"/>
    <property type="evidence" value="ECO:0007669"/>
    <property type="project" value="UniProtKB-UniRule"/>
</dbReference>
<dbReference type="GO" id="GO:0002939">
    <property type="term" value="P:tRNA N1-guanine methylation"/>
    <property type="evidence" value="ECO:0007669"/>
    <property type="project" value="TreeGrafter"/>
</dbReference>
<dbReference type="CDD" id="cd18080">
    <property type="entry name" value="TrmD-like"/>
    <property type="match status" value="1"/>
</dbReference>
<dbReference type="FunFam" id="1.10.1270.20:FF:000001">
    <property type="entry name" value="tRNA (guanine-N(1)-)-methyltransferase"/>
    <property type="match status" value="1"/>
</dbReference>
<dbReference type="FunFam" id="3.40.1280.10:FF:000001">
    <property type="entry name" value="tRNA (guanine-N(1)-)-methyltransferase"/>
    <property type="match status" value="1"/>
</dbReference>
<dbReference type="Gene3D" id="3.40.1280.10">
    <property type="match status" value="1"/>
</dbReference>
<dbReference type="Gene3D" id="1.10.1270.20">
    <property type="entry name" value="tRNA(m1g37)methyltransferase, domain 2"/>
    <property type="match status" value="1"/>
</dbReference>
<dbReference type="HAMAP" id="MF_00605">
    <property type="entry name" value="TrmD"/>
    <property type="match status" value="1"/>
</dbReference>
<dbReference type="InterPro" id="IPR029028">
    <property type="entry name" value="Alpha/beta_knot_MTases"/>
</dbReference>
<dbReference type="InterPro" id="IPR023148">
    <property type="entry name" value="tRNA_m1G_MeTrfase_C_sf"/>
</dbReference>
<dbReference type="InterPro" id="IPR002649">
    <property type="entry name" value="tRNA_m1G_MeTrfase_TrmD"/>
</dbReference>
<dbReference type="InterPro" id="IPR029026">
    <property type="entry name" value="tRNA_m1G_MTases_N"/>
</dbReference>
<dbReference type="InterPro" id="IPR016009">
    <property type="entry name" value="tRNA_MeTrfase_TRMD/TRM10"/>
</dbReference>
<dbReference type="NCBIfam" id="NF000648">
    <property type="entry name" value="PRK00026.1"/>
    <property type="match status" value="1"/>
</dbReference>
<dbReference type="NCBIfam" id="TIGR00088">
    <property type="entry name" value="trmD"/>
    <property type="match status" value="1"/>
</dbReference>
<dbReference type="PANTHER" id="PTHR46417">
    <property type="entry name" value="TRNA (GUANINE-N(1)-)-METHYLTRANSFERASE"/>
    <property type="match status" value="1"/>
</dbReference>
<dbReference type="PANTHER" id="PTHR46417:SF1">
    <property type="entry name" value="TRNA (GUANINE-N(1)-)-METHYLTRANSFERASE"/>
    <property type="match status" value="1"/>
</dbReference>
<dbReference type="Pfam" id="PF01746">
    <property type="entry name" value="tRNA_m1G_MT"/>
    <property type="match status" value="1"/>
</dbReference>
<dbReference type="PIRSF" id="PIRSF000386">
    <property type="entry name" value="tRNA_mtase"/>
    <property type="match status" value="1"/>
</dbReference>
<dbReference type="SUPFAM" id="SSF75217">
    <property type="entry name" value="alpha/beta knot"/>
    <property type="match status" value="1"/>
</dbReference>
<evidence type="ECO:0000255" key="1">
    <source>
        <dbReference type="HAMAP-Rule" id="MF_00605"/>
    </source>
</evidence>
<feature type="chain" id="PRO_1000130196" description="tRNA (guanine-N(1)-)-methyltransferase">
    <location>
        <begin position="1"/>
        <end position="250"/>
    </location>
</feature>
<feature type="binding site" evidence="1">
    <location>
        <position position="113"/>
    </location>
    <ligand>
        <name>S-adenosyl-L-methionine</name>
        <dbReference type="ChEBI" id="CHEBI:59789"/>
    </ligand>
</feature>
<feature type="binding site" evidence="1">
    <location>
        <begin position="133"/>
        <end position="138"/>
    </location>
    <ligand>
        <name>S-adenosyl-L-methionine</name>
        <dbReference type="ChEBI" id="CHEBI:59789"/>
    </ligand>
</feature>
<organism>
    <name type="scientific">Proteus mirabilis (strain HI4320)</name>
    <dbReference type="NCBI Taxonomy" id="529507"/>
    <lineage>
        <taxon>Bacteria</taxon>
        <taxon>Pseudomonadati</taxon>
        <taxon>Pseudomonadota</taxon>
        <taxon>Gammaproteobacteria</taxon>
        <taxon>Enterobacterales</taxon>
        <taxon>Morganellaceae</taxon>
        <taxon>Proteus</taxon>
    </lineage>
</organism>